<name>GUAA_GEOMG</name>
<dbReference type="EC" id="6.3.5.2" evidence="1"/>
<dbReference type="EMBL" id="CP000148">
    <property type="protein sequence ID" value="ABB32517.1"/>
    <property type="molecule type" value="Genomic_DNA"/>
</dbReference>
<dbReference type="RefSeq" id="WP_004514506.1">
    <property type="nucleotide sequence ID" value="NC_007517.1"/>
</dbReference>
<dbReference type="SMR" id="Q39TA7"/>
<dbReference type="STRING" id="269799.Gmet_2292"/>
<dbReference type="KEGG" id="gme:Gmet_2292"/>
<dbReference type="eggNOG" id="COG0518">
    <property type="taxonomic scope" value="Bacteria"/>
</dbReference>
<dbReference type="eggNOG" id="COG0519">
    <property type="taxonomic scope" value="Bacteria"/>
</dbReference>
<dbReference type="HOGENOM" id="CLU_014340_0_5_7"/>
<dbReference type="UniPathway" id="UPA00189">
    <property type="reaction ID" value="UER00296"/>
</dbReference>
<dbReference type="Proteomes" id="UP000007073">
    <property type="component" value="Chromosome"/>
</dbReference>
<dbReference type="GO" id="GO:0005829">
    <property type="term" value="C:cytosol"/>
    <property type="evidence" value="ECO:0007669"/>
    <property type="project" value="TreeGrafter"/>
</dbReference>
<dbReference type="GO" id="GO:0005524">
    <property type="term" value="F:ATP binding"/>
    <property type="evidence" value="ECO:0007669"/>
    <property type="project" value="UniProtKB-UniRule"/>
</dbReference>
<dbReference type="GO" id="GO:0003921">
    <property type="term" value="F:GMP synthase activity"/>
    <property type="evidence" value="ECO:0007669"/>
    <property type="project" value="InterPro"/>
</dbReference>
<dbReference type="CDD" id="cd01742">
    <property type="entry name" value="GATase1_GMP_Synthase"/>
    <property type="match status" value="1"/>
</dbReference>
<dbReference type="CDD" id="cd01997">
    <property type="entry name" value="GMP_synthase_C"/>
    <property type="match status" value="1"/>
</dbReference>
<dbReference type="FunFam" id="3.30.300.10:FF:000002">
    <property type="entry name" value="GMP synthase [glutamine-hydrolyzing]"/>
    <property type="match status" value="1"/>
</dbReference>
<dbReference type="FunFam" id="3.40.50.620:FF:000001">
    <property type="entry name" value="GMP synthase [glutamine-hydrolyzing]"/>
    <property type="match status" value="1"/>
</dbReference>
<dbReference type="FunFam" id="3.40.50.880:FF:000001">
    <property type="entry name" value="GMP synthase [glutamine-hydrolyzing]"/>
    <property type="match status" value="1"/>
</dbReference>
<dbReference type="Gene3D" id="3.30.300.10">
    <property type="match status" value="1"/>
</dbReference>
<dbReference type="Gene3D" id="3.40.50.880">
    <property type="match status" value="1"/>
</dbReference>
<dbReference type="Gene3D" id="3.40.50.620">
    <property type="entry name" value="HUPs"/>
    <property type="match status" value="1"/>
</dbReference>
<dbReference type="HAMAP" id="MF_00344">
    <property type="entry name" value="GMP_synthase"/>
    <property type="match status" value="1"/>
</dbReference>
<dbReference type="InterPro" id="IPR029062">
    <property type="entry name" value="Class_I_gatase-like"/>
</dbReference>
<dbReference type="InterPro" id="IPR017926">
    <property type="entry name" value="GATASE"/>
</dbReference>
<dbReference type="InterPro" id="IPR001674">
    <property type="entry name" value="GMP_synth_C"/>
</dbReference>
<dbReference type="InterPro" id="IPR004739">
    <property type="entry name" value="GMP_synth_GATase"/>
</dbReference>
<dbReference type="InterPro" id="IPR022955">
    <property type="entry name" value="GMP_synthase"/>
</dbReference>
<dbReference type="InterPro" id="IPR025777">
    <property type="entry name" value="GMPS_ATP_PPase_dom"/>
</dbReference>
<dbReference type="InterPro" id="IPR022310">
    <property type="entry name" value="NAD/GMP_synthase"/>
</dbReference>
<dbReference type="InterPro" id="IPR014729">
    <property type="entry name" value="Rossmann-like_a/b/a_fold"/>
</dbReference>
<dbReference type="NCBIfam" id="TIGR00884">
    <property type="entry name" value="guaA_Cterm"/>
    <property type="match status" value="1"/>
</dbReference>
<dbReference type="NCBIfam" id="TIGR00888">
    <property type="entry name" value="guaA_Nterm"/>
    <property type="match status" value="1"/>
</dbReference>
<dbReference type="NCBIfam" id="NF000848">
    <property type="entry name" value="PRK00074.1"/>
    <property type="match status" value="1"/>
</dbReference>
<dbReference type="PANTHER" id="PTHR11922:SF2">
    <property type="entry name" value="GMP SYNTHASE [GLUTAMINE-HYDROLYZING]"/>
    <property type="match status" value="1"/>
</dbReference>
<dbReference type="PANTHER" id="PTHR11922">
    <property type="entry name" value="GMP SYNTHASE-RELATED"/>
    <property type="match status" value="1"/>
</dbReference>
<dbReference type="Pfam" id="PF00117">
    <property type="entry name" value="GATase"/>
    <property type="match status" value="1"/>
</dbReference>
<dbReference type="Pfam" id="PF00958">
    <property type="entry name" value="GMP_synt_C"/>
    <property type="match status" value="1"/>
</dbReference>
<dbReference type="Pfam" id="PF02540">
    <property type="entry name" value="NAD_synthase"/>
    <property type="match status" value="1"/>
</dbReference>
<dbReference type="PRINTS" id="PR00097">
    <property type="entry name" value="ANTSNTHASEII"/>
</dbReference>
<dbReference type="PRINTS" id="PR00099">
    <property type="entry name" value="CPSGATASE"/>
</dbReference>
<dbReference type="PRINTS" id="PR00096">
    <property type="entry name" value="GATASE"/>
</dbReference>
<dbReference type="SUPFAM" id="SSF52402">
    <property type="entry name" value="Adenine nucleotide alpha hydrolases-like"/>
    <property type="match status" value="1"/>
</dbReference>
<dbReference type="SUPFAM" id="SSF52317">
    <property type="entry name" value="Class I glutamine amidotransferase-like"/>
    <property type="match status" value="1"/>
</dbReference>
<dbReference type="SUPFAM" id="SSF54810">
    <property type="entry name" value="GMP synthetase C-terminal dimerisation domain"/>
    <property type="match status" value="1"/>
</dbReference>
<dbReference type="PROSITE" id="PS51273">
    <property type="entry name" value="GATASE_TYPE_1"/>
    <property type="match status" value="1"/>
</dbReference>
<dbReference type="PROSITE" id="PS51553">
    <property type="entry name" value="GMPS_ATP_PPASE"/>
    <property type="match status" value="1"/>
</dbReference>
<feature type="chain" id="PRO_0000229431" description="GMP synthase [glutamine-hydrolyzing]">
    <location>
        <begin position="1"/>
        <end position="520"/>
    </location>
</feature>
<feature type="domain" description="Glutamine amidotransferase type-1" evidence="1">
    <location>
        <begin position="9"/>
        <end position="202"/>
    </location>
</feature>
<feature type="domain" description="GMPS ATP-PPase" evidence="1">
    <location>
        <begin position="203"/>
        <end position="395"/>
    </location>
</feature>
<feature type="active site" description="Nucleophile" evidence="1">
    <location>
        <position position="86"/>
    </location>
</feature>
<feature type="active site" evidence="1">
    <location>
        <position position="176"/>
    </location>
</feature>
<feature type="active site" evidence="1">
    <location>
        <position position="178"/>
    </location>
</feature>
<feature type="binding site" evidence="1">
    <location>
        <begin position="230"/>
        <end position="236"/>
    </location>
    <ligand>
        <name>ATP</name>
        <dbReference type="ChEBI" id="CHEBI:30616"/>
    </ligand>
</feature>
<comment type="function">
    <text evidence="1">Catalyzes the synthesis of GMP from XMP.</text>
</comment>
<comment type="catalytic activity">
    <reaction evidence="1">
        <text>XMP + L-glutamine + ATP + H2O = GMP + L-glutamate + AMP + diphosphate + 2 H(+)</text>
        <dbReference type="Rhea" id="RHEA:11680"/>
        <dbReference type="ChEBI" id="CHEBI:15377"/>
        <dbReference type="ChEBI" id="CHEBI:15378"/>
        <dbReference type="ChEBI" id="CHEBI:29985"/>
        <dbReference type="ChEBI" id="CHEBI:30616"/>
        <dbReference type="ChEBI" id="CHEBI:33019"/>
        <dbReference type="ChEBI" id="CHEBI:57464"/>
        <dbReference type="ChEBI" id="CHEBI:58115"/>
        <dbReference type="ChEBI" id="CHEBI:58359"/>
        <dbReference type="ChEBI" id="CHEBI:456215"/>
        <dbReference type="EC" id="6.3.5.2"/>
    </reaction>
</comment>
<comment type="pathway">
    <text evidence="1">Purine metabolism; GMP biosynthesis; GMP from XMP (L-Gln route): step 1/1.</text>
</comment>
<comment type="subunit">
    <text evidence="1">Homodimer.</text>
</comment>
<evidence type="ECO:0000255" key="1">
    <source>
        <dbReference type="HAMAP-Rule" id="MF_00344"/>
    </source>
</evidence>
<accession>Q39TA7</accession>
<protein>
    <recommendedName>
        <fullName evidence="1">GMP synthase [glutamine-hydrolyzing]</fullName>
        <ecNumber evidence="1">6.3.5.2</ecNumber>
    </recommendedName>
    <alternativeName>
        <fullName evidence="1">GMP synthetase</fullName>
    </alternativeName>
    <alternativeName>
        <fullName evidence="1">Glutamine amidotransferase</fullName>
    </alternativeName>
</protein>
<gene>
    <name evidence="1" type="primary">guaA</name>
    <name type="ordered locus">Gmet_2292</name>
</gene>
<reference key="1">
    <citation type="journal article" date="2009" name="BMC Microbiol.">
        <title>The genome sequence of Geobacter metallireducens: features of metabolism, physiology and regulation common and dissimilar to Geobacter sulfurreducens.</title>
        <authorList>
            <person name="Aklujkar M."/>
            <person name="Krushkal J."/>
            <person name="DiBartolo G."/>
            <person name="Lapidus A."/>
            <person name="Land M.L."/>
            <person name="Lovley D.R."/>
        </authorList>
    </citation>
    <scope>NUCLEOTIDE SEQUENCE [LARGE SCALE GENOMIC DNA]</scope>
    <source>
        <strain>ATCC 53774 / DSM 7210 / GS-15</strain>
    </source>
</reference>
<sequence length="520" mass="57141">MSSDIHSEKILILDFGSQYTQLIARRVREAHVYCELHPFDMDLAAIRAFAPRGIILSGGPKSVYEEGAPAVEEALFELGVPVLGICYGMQLMSRHFGGQVVPAGKREFGHADLLAVGTPGPLFDGFFVEGKSPVWMSHGDHVSLVPAGFQVVGETANAPVCAIQDLARNLYGVQFHPEVNHTPRGELLIDTFVRKICGCSGQWTPGHIIDDAVSRIRAQVGNDRVILGLSGGVDSSVAAALIHRAIGDQLTCVFVDNGLLRLSEGDQVMATFAENLGVKVIRVDAEDRFLTALAGESDPEKKRKIIGKLFVDIFEEESNKITDARWLAQGTIYPDVIESAGAKTGKAHNIKSHHNVGGLPDYMKLKLLEPLRELFKDEVRAIGEELGLPHQMVWRHPFPGPGLGVRILGEVKKEYADILRRADAIYIEELYAAGHYDKISQAFAVFLPVKSVGVMGDGRTYEYVVALRAVETKDFMTAGWYPLPYEDMARISSRIINEVKGVNRVVYDISSKPPATIEWE</sequence>
<organism>
    <name type="scientific">Geobacter metallireducens (strain ATCC 53774 / DSM 7210 / GS-15)</name>
    <dbReference type="NCBI Taxonomy" id="269799"/>
    <lineage>
        <taxon>Bacteria</taxon>
        <taxon>Pseudomonadati</taxon>
        <taxon>Thermodesulfobacteriota</taxon>
        <taxon>Desulfuromonadia</taxon>
        <taxon>Geobacterales</taxon>
        <taxon>Geobacteraceae</taxon>
        <taxon>Geobacter</taxon>
    </lineage>
</organism>
<keyword id="KW-0067">ATP-binding</keyword>
<keyword id="KW-0315">Glutamine amidotransferase</keyword>
<keyword id="KW-0332">GMP biosynthesis</keyword>
<keyword id="KW-0436">Ligase</keyword>
<keyword id="KW-0547">Nucleotide-binding</keyword>
<keyword id="KW-0658">Purine biosynthesis</keyword>
<keyword id="KW-1185">Reference proteome</keyword>
<proteinExistence type="inferred from homology"/>